<feature type="chain" id="PRO_1000185330" description="DNA-directed RNA polymerase subunit epsilon">
    <location>
        <begin position="1"/>
        <end position="70"/>
    </location>
</feature>
<keyword id="KW-0240">DNA-directed RNA polymerase</keyword>
<keyword id="KW-0548">Nucleotidyltransferase</keyword>
<keyword id="KW-0804">Transcription</keyword>
<keyword id="KW-0808">Transferase</keyword>
<comment type="function">
    <text evidence="1">A non-essential component of RNA polymerase (RNAP).</text>
</comment>
<comment type="catalytic activity">
    <reaction evidence="1">
        <text>RNA(n) + a ribonucleoside 5'-triphosphate = RNA(n+1) + diphosphate</text>
        <dbReference type="Rhea" id="RHEA:21248"/>
        <dbReference type="Rhea" id="RHEA-COMP:14527"/>
        <dbReference type="Rhea" id="RHEA-COMP:17342"/>
        <dbReference type="ChEBI" id="CHEBI:33019"/>
        <dbReference type="ChEBI" id="CHEBI:61557"/>
        <dbReference type="ChEBI" id="CHEBI:140395"/>
        <dbReference type="EC" id="2.7.7.6"/>
    </reaction>
</comment>
<comment type="subunit">
    <text evidence="1">RNAP is composed of a core of 2 alpha, a beta and a beta' subunit. The core is associated with a delta subunit, and at least one of epsilon or omega. When a sigma factor is associated with the core the holoenzyme is formed, which can initiate transcription.</text>
</comment>
<comment type="similarity">
    <text evidence="1">Belongs to the RNA polymerase subunit epsilon family.</text>
</comment>
<sequence>MIFKVFYQEKMTEVPVRENTKVLYLEATSEKDVRTKLNKFAYNIEFVQSVTGNHLEYEKANADLTLAEIV</sequence>
<gene>
    <name evidence="1" type="primary">rpoY</name>
    <name type="ordered locus">BAA_4211</name>
</gene>
<accession>C3P6Y3</accession>
<name>RPOY_BACAA</name>
<protein>
    <recommendedName>
        <fullName evidence="1">DNA-directed RNA polymerase subunit epsilon</fullName>
        <shortName evidence="1">RNAP epsilon subunit</shortName>
        <ecNumber evidence="1">2.7.7.6</ecNumber>
    </recommendedName>
    <alternativeName>
        <fullName evidence="1">RNA polymerase epsilon subunit</fullName>
    </alternativeName>
    <alternativeName>
        <fullName evidence="1">Transcriptase subunit epsilon</fullName>
    </alternativeName>
</protein>
<evidence type="ECO:0000255" key="1">
    <source>
        <dbReference type="HAMAP-Rule" id="MF_01553"/>
    </source>
</evidence>
<reference key="1">
    <citation type="submission" date="2009-04" db="EMBL/GenBank/DDBJ databases">
        <title>Genome sequence of Bacillus anthracis A0248.</title>
        <authorList>
            <person name="Dodson R.J."/>
            <person name="Munk A.C."/>
            <person name="Bruce D."/>
            <person name="Detter C."/>
            <person name="Tapia R."/>
            <person name="Sutton G."/>
            <person name="Sims D."/>
            <person name="Brettin T."/>
        </authorList>
    </citation>
    <scope>NUCLEOTIDE SEQUENCE [LARGE SCALE GENOMIC DNA]</scope>
    <source>
        <strain>A0248</strain>
    </source>
</reference>
<organism>
    <name type="scientific">Bacillus anthracis (strain A0248)</name>
    <dbReference type="NCBI Taxonomy" id="592021"/>
    <lineage>
        <taxon>Bacteria</taxon>
        <taxon>Bacillati</taxon>
        <taxon>Bacillota</taxon>
        <taxon>Bacilli</taxon>
        <taxon>Bacillales</taxon>
        <taxon>Bacillaceae</taxon>
        <taxon>Bacillus</taxon>
        <taxon>Bacillus cereus group</taxon>
    </lineage>
</organism>
<proteinExistence type="inferred from homology"/>
<dbReference type="EC" id="2.7.7.6" evidence="1"/>
<dbReference type="EMBL" id="CP001598">
    <property type="protein sequence ID" value="ACQ46466.1"/>
    <property type="molecule type" value="Genomic_DNA"/>
</dbReference>
<dbReference type="RefSeq" id="WP_000576443.1">
    <property type="nucleotide sequence ID" value="NC_012659.1"/>
</dbReference>
<dbReference type="SMR" id="C3P6Y3"/>
<dbReference type="GeneID" id="45023864"/>
<dbReference type="KEGG" id="bai:BAA_4211"/>
<dbReference type="HOGENOM" id="CLU_187518_0_0_9"/>
<dbReference type="GO" id="GO:0000428">
    <property type="term" value="C:DNA-directed RNA polymerase complex"/>
    <property type="evidence" value="ECO:0007669"/>
    <property type="project" value="UniProtKB-KW"/>
</dbReference>
<dbReference type="GO" id="GO:0003677">
    <property type="term" value="F:DNA binding"/>
    <property type="evidence" value="ECO:0007669"/>
    <property type="project" value="UniProtKB-UniRule"/>
</dbReference>
<dbReference type="GO" id="GO:0003899">
    <property type="term" value="F:DNA-directed RNA polymerase activity"/>
    <property type="evidence" value="ECO:0007669"/>
    <property type="project" value="UniProtKB-UniRule"/>
</dbReference>
<dbReference type="GO" id="GO:0006351">
    <property type="term" value="P:DNA-templated transcription"/>
    <property type="evidence" value="ECO:0007669"/>
    <property type="project" value="UniProtKB-UniRule"/>
</dbReference>
<dbReference type="Gene3D" id="3.10.20.730">
    <property type="entry name" value="RNAP, epsilon subunit-like"/>
    <property type="match status" value="1"/>
</dbReference>
<dbReference type="HAMAP" id="MF_01553">
    <property type="entry name" value="RNApol_bact_RpoY"/>
    <property type="match status" value="1"/>
</dbReference>
<dbReference type="InterPro" id="IPR009907">
    <property type="entry name" value="RpoY"/>
</dbReference>
<dbReference type="NCBIfam" id="NF010188">
    <property type="entry name" value="PRK13667.1"/>
    <property type="match status" value="1"/>
</dbReference>
<dbReference type="Pfam" id="PF07288">
    <property type="entry name" value="RpoY"/>
    <property type="match status" value="1"/>
</dbReference>